<evidence type="ECO:0000305" key="1"/>
<proteinExistence type="inferred from homology"/>
<sequence>MNNLSPLEVAIADFQAAKTTPELIRATKNLCDLRTIEAIPILIEGLGFNNPAVASVATSGLIELGSQAVPSLLVSLDEKNYGSRAWVVRALASIRDPRSLDLLEHALATDIAPSVRRSAARGLAELNLIYPEDRSKLERCLLALLAAIKDDEWVVRYAVIFGIELHLRRYNPNNKNHCILALKQLSSDSESIKVIRLRAKLALQRLASS</sequence>
<dbReference type="EMBL" id="M95288">
    <property type="protein sequence ID" value="AAA27349.1"/>
    <property type="molecule type" value="Genomic_DNA"/>
</dbReference>
<dbReference type="PIR" id="S31071">
    <property type="entry name" value="S31071"/>
</dbReference>
<dbReference type="RefSeq" id="WP_048347949.1">
    <property type="nucleotide sequence ID" value="NZ_CP011941.1"/>
</dbReference>
<dbReference type="SMR" id="Q02185"/>
<dbReference type="STRING" id="32052.WB44_13610"/>
<dbReference type="OrthoDB" id="428465at2"/>
<dbReference type="GO" id="GO:0030089">
    <property type="term" value="C:phycobilisome"/>
    <property type="evidence" value="ECO:0007669"/>
    <property type="project" value="UniProtKB-KW"/>
</dbReference>
<dbReference type="GO" id="GO:0016829">
    <property type="term" value="F:lyase activity"/>
    <property type="evidence" value="ECO:0007669"/>
    <property type="project" value="UniProtKB-KW"/>
</dbReference>
<dbReference type="GO" id="GO:0016491">
    <property type="term" value="F:oxidoreductase activity"/>
    <property type="evidence" value="ECO:0007669"/>
    <property type="project" value="TreeGrafter"/>
</dbReference>
<dbReference type="Gene3D" id="1.25.10.10">
    <property type="entry name" value="Leucine-rich Repeat Variant"/>
    <property type="match status" value="1"/>
</dbReference>
<dbReference type="InterPro" id="IPR011989">
    <property type="entry name" value="ARM-like"/>
</dbReference>
<dbReference type="InterPro" id="IPR016024">
    <property type="entry name" value="ARM-type_fold"/>
</dbReference>
<dbReference type="InterPro" id="IPR004155">
    <property type="entry name" value="PBS_lyase_HEAT"/>
</dbReference>
<dbReference type="PANTHER" id="PTHR12697:SF38">
    <property type="entry name" value="PBS LYASE HEAT DOMAIN PROTEIN REPEAT-CONTAINING PROTEIN"/>
    <property type="match status" value="1"/>
</dbReference>
<dbReference type="PANTHER" id="PTHR12697">
    <property type="entry name" value="PBS LYASE HEAT-LIKE PROTEIN"/>
    <property type="match status" value="1"/>
</dbReference>
<dbReference type="Pfam" id="PF13646">
    <property type="entry name" value="HEAT_2"/>
    <property type="match status" value="1"/>
</dbReference>
<dbReference type="SMART" id="SM00567">
    <property type="entry name" value="EZ_HEAT"/>
    <property type="match status" value="2"/>
</dbReference>
<dbReference type="SUPFAM" id="SSF48371">
    <property type="entry name" value="ARM repeat"/>
    <property type="match status" value="1"/>
</dbReference>
<gene>
    <name type="primary">rpcF</name>
</gene>
<name>RPCF_SYNPY</name>
<comment type="function">
    <text>An enzyme involved in the biosynthesis of bilin. Might be involved in the specific attachment of phycoerythrobilin (PEB) to the R-phycocyanin II alpha chain.</text>
</comment>
<comment type="similarity">
    <text evidence="1">Belongs to the CpcE/RpcE/PecE family.</text>
</comment>
<feature type="chain" id="PRO_0000199285" description="Bilin biosynthesis protein RpcF">
    <location>
        <begin position="1"/>
        <end position="209"/>
    </location>
</feature>
<reference key="1">
    <citation type="journal article" date="1993" name="Plant Mol. Biol.">
        <title>Genes of the R-phycocyanin II locus of marine Synechococcus spp., and comparison of protein-chromophore interactions in phycocyanins differing in bilin composition.</title>
        <authorList>
            <person name="de Lorimier R."/>
            <person name="Wilbanks S.M."/>
            <person name="Glazer A.N."/>
        </authorList>
    </citation>
    <scope>NUCLEOTIDE SEQUENCE [GENOMIC DNA]</scope>
</reference>
<organism>
    <name type="scientific">Synechococcus sp. (strain WH8020)</name>
    <dbReference type="NCBI Taxonomy" id="32052"/>
    <lineage>
        <taxon>Bacteria</taxon>
        <taxon>Bacillati</taxon>
        <taxon>Cyanobacteriota</taxon>
        <taxon>Cyanophyceae</taxon>
        <taxon>Synechococcales</taxon>
        <taxon>Synechococcaceae</taxon>
        <taxon>Synechococcus</taxon>
    </lineage>
</organism>
<accession>Q02185</accession>
<keyword id="KW-0042">Antenna complex</keyword>
<keyword id="KW-0456">Lyase</keyword>
<keyword id="KW-0605">Phycobilisome</keyword>
<protein>
    <recommendedName>
        <fullName>Bilin biosynthesis protein RpcF</fullName>
    </recommendedName>
</protein>